<reference key="1">
    <citation type="submission" date="2006-09" db="EMBL/GenBank/DDBJ databases">
        <title>Complete sequence of Rhodopseudomonas palustris BisA53.</title>
        <authorList>
            <consortium name="US DOE Joint Genome Institute"/>
            <person name="Copeland A."/>
            <person name="Lucas S."/>
            <person name="Lapidus A."/>
            <person name="Barry K."/>
            <person name="Detter J.C."/>
            <person name="Glavina del Rio T."/>
            <person name="Hammon N."/>
            <person name="Israni S."/>
            <person name="Dalin E."/>
            <person name="Tice H."/>
            <person name="Pitluck S."/>
            <person name="Chain P."/>
            <person name="Malfatti S."/>
            <person name="Shin M."/>
            <person name="Vergez L."/>
            <person name="Schmutz J."/>
            <person name="Larimer F."/>
            <person name="Land M."/>
            <person name="Hauser L."/>
            <person name="Pelletier D.A."/>
            <person name="Kyrpides N."/>
            <person name="Kim E."/>
            <person name="Harwood C.S."/>
            <person name="Oda Y."/>
            <person name="Richardson P."/>
        </authorList>
    </citation>
    <scope>NUCLEOTIDE SEQUENCE [LARGE SCALE GENOMIC DNA]</scope>
    <source>
        <strain>BisA53</strain>
    </source>
</reference>
<feature type="chain" id="PRO_0000375690" description="Succinyl-diaminopimelate desuccinylase">
    <location>
        <begin position="1"/>
        <end position="387"/>
    </location>
</feature>
<feature type="active site" evidence="1">
    <location>
        <position position="76"/>
    </location>
</feature>
<feature type="active site" description="Proton acceptor" evidence="1">
    <location>
        <position position="142"/>
    </location>
</feature>
<feature type="binding site" evidence="1">
    <location>
        <position position="74"/>
    </location>
    <ligand>
        <name>Zn(2+)</name>
        <dbReference type="ChEBI" id="CHEBI:29105"/>
        <label>1</label>
    </ligand>
</feature>
<feature type="binding site" evidence="1">
    <location>
        <position position="107"/>
    </location>
    <ligand>
        <name>Zn(2+)</name>
        <dbReference type="ChEBI" id="CHEBI:29105"/>
        <label>1</label>
    </ligand>
</feature>
<feature type="binding site" evidence="1">
    <location>
        <position position="107"/>
    </location>
    <ligand>
        <name>Zn(2+)</name>
        <dbReference type="ChEBI" id="CHEBI:29105"/>
        <label>2</label>
    </ligand>
</feature>
<feature type="binding site" evidence="1">
    <location>
        <position position="143"/>
    </location>
    <ligand>
        <name>Zn(2+)</name>
        <dbReference type="ChEBI" id="CHEBI:29105"/>
        <label>2</label>
    </ligand>
</feature>
<feature type="binding site" evidence="1">
    <location>
        <position position="171"/>
    </location>
    <ligand>
        <name>Zn(2+)</name>
        <dbReference type="ChEBI" id="CHEBI:29105"/>
        <label>1</label>
    </ligand>
</feature>
<feature type="binding site" evidence="1">
    <location>
        <position position="360"/>
    </location>
    <ligand>
        <name>Zn(2+)</name>
        <dbReference type="ChEBI" id="CHEBI:29105"/>
        <label>2</label>
    </ligand>
</feature>
<sequence length="387" mass="41014">MPATPDALSIARDLLRCPSVTPADAGALDVLDRLLRGAGFEVHRVTFSEPGAADIDNLYARIGTGAPHLMFAGHTDVVPPGDVSAWSHGAFAGEVADGQLYGRGAVDMKGGIACAVAAVLVYLAACGGQPKGSISFLITGDEEDIAVNGTVKLLQWADARGENFDHCIVGEPSNVEELGDCIKIGRRGSLSGTLIVDGVQGHVAYPQRAVNPVPDIATLIVALSHEPLDHGTAQFQPSNLEFTSVDVGNAATNVIPAQARAKFNIRFNDQHSIKSLQALIEHHLAAACGNRIRARIEWLPSNAGAFVTKPGPFTDLVTAAIEQVTGRRPELNTGGGTSDARFITHYCPVIEFGLVGQTMHKVDERTPVSDLEKLTAIYRGVLERYFA</sequence>
<proteinExistence type="inferred from homology"/>
<name>DAPE_RHOP5</name>
<comment type="function">
    <text evidence="1">Catalyzes the hydrolysis of N-succinyl-L,L-diaminopimelic acid (SDAP), forming succinate and LL-2,6-diaminopimelate (DAP), an intermediate involved in the bacterial biosynthesis of lysine and meso-diaminopimelic acid, an essential component of bacterial cell walls.</text>
</comment>
<comment type="catalytic activity">
    <reaction evidence="1">
        <text>N-succinyl-(2S,6S)-2,6-diaminopimelate + H2O = (2S,6S)-2,6-diaminopimelate + succinate</text>
        <dbReference type="Rhea" id="RHEA:22608"/>
        <dbReference type="ChEBI" id="CHEBI:15377"/>
        <dbReference type="ChEBI" id="CHEBI:30031"/>
        <dbReference type="ChEBI" id="CHEBI:57609"/>
        <dbReference type="ChEBI" id="CHEBI:58087"/>
        <dbReference type="EC" id="3.5.1.18"/>
    </reaction>
</comment>
<comment type="cofactor">
    <cofactor evidence="1">
        <name>Zn(2+)</name>
        <dbReference type="ChEBI" id="CHEBI:29105"/>
    </cofactor>
    <cofactor evidence="1">
        <name>Co(2+)</name>
        <dbReference type="ChEBI" id="CHEBI:48828"/>
    </cofactor>
    <text evidence="1">Binds 2 Zn(2+) or Co(2+) ions per subunit.</text>
</comment>
<comment type="pathway">
    <text evidence="1">Amino-acid biosynthesis; L-lysine biosynthesis via DAP pathway; LL-2,6-diaminopimelate from (S)-tetrahydrodipicolinate (succinylase route): step 3/3.</text>
</comment>
<comment type="subunit">
    <text evidence="1">Homodimer.</text>
</comment>
<comment type="similarity">
    <text evidence="1">Belongs to the peptidase M20A family. DapE subfamily.</text>
</comment>
<gene>
    <name evidence="1" type="primary">dapE</name>
    <name type="ordered locus">RPE_0653</name>
</gene>
<keyword id="KW-0028">Amino-acid biosynthesis</keyword>
<keyword id="KW-0170">Cobalt</keyword>
<keyword id="KW-0220">Diaminopimelate biosynthesis</keyword>
<keyword id="KW-0378">Hydrolase</keyword>
<keyword id="KW-0457">Lysine biosynthesis</keyword>
<keyword id="KW-0479">Metal-binding</keyword>
<keyword id="KW-0862">Zinc</keyword>
<accession>Q07TX3</accession>
<evidence type="ECO:0000255" key="1">
    <source>
        <dbReference type="HAMAP-Rule" id="MF_01690"/>
    </source>
</evidence>
<organism>
    <name type="scientific">Rhodopseudomonas palustris (strain BisA53)</name>
    <dbReference type="NCBI Taxonomy" id="316055"/>
    <lineage>
        <taxon>Bacteria</taxon>
        <taxon>Pseudomonadati</taxon>
        <taxon>Pseudomonadota</taxon>
        <taxon>Alphaproteobacteria</taxon>
        <taxon>Hyphomicrobiales</taxon>
        <taxon>Nitrobacteraceae</taxon>
        <taxon>Rhodopseudomonas</taxon>
    </lineage>
</organism>
<protein>
    <recommendedName>
        <fullName evidence="1">Succinyl-diaminopimelate desuccinylase</fullName>
        <shortName evidence="1">SDAP desuccinylase</shortName>
        <ecNumber evidence="1">3.5.1.18</ecNumber>
    </recommendedName>
    <alternativeName>
        <fullName evidence="1">N-succinyl-LL-2,6-diaminoheptanedioate amidohydrolase</fullName>
    </alternativeName>
</protein>
<dbReference type="EC" id="3.5.1.18" evidence="1"/>
<dbReference type="EMBL" id="CP000463">
    <property type="protein sequence ID" value="ABJ04611.1"/>
    <property type="molecule type" value="Genomic_DNA"/>
</dbReference>
<dbReference type="SMR" id="Q07TX3"/>
<dbReference type="STRING" id="316055.RPE_0653"/>
<dbReference type="KEGG" id="rpe:RPE_0653"/>
<dbReference type="eggNOG" id="COG0624">
    <property type="taxonomic scope" value="Bacteria"/>
</dbReference>
<dbReference type="HOGENOM" id="CLU_021802_4_0_5"/>
<dbReference type="OrthoDB" id="9809784at2"/>
<dbReference type="UniPathway" id="UPA00034">
    <property type="reaction ID" value="UER00021"/>
</dbReference>
<dbReference type="GO" id="GO:0008777">
    <property type="term" value="F:acetylornithine deacetylase activity"/>
    <property type="evidence" value="ECO:0007669"/>
    <property type="project" value="TreeGrafter"/>
</dbReference>
<dbReference type="GO" id="GO:0050897">
    <property type="term" value="F:cobalt ion binding"/>
    <property type="evidence" value="ECO:0007669"/>
    <property type="project" value="UniProtKB-UniRule"/>
</dbReference>
<dbReference type="GO" id="GO:0009014">
    <property type="term" value="F:succinyl-diaminopimelate desuccinylase activity"/>
    <property type="evidence" value="ECO:0007669"/>
    <property type="project" value="UniProtKB-UniRule"/>
</dbReference>
<dbReference type="GO" id="GO:0008270">
    <property type="term" value="F:zinc ion binding"/>
    <property type="evidence" value="ECO:0007669"/>
    <property type="project" value="UniProtKB-UniRule"/>
</dbReference>
<dbReference type="GO" id="GO:0019877">
    <property type="term" value="P:diaminopimelate biosynthetic process"/>
    <property type="evidence" value="ECO:0007669"/>
    <property type="project" value="UniProtKB-UniRule"/>
</dbReference>
<dbReference type="GO" id="GO:0006526">
    <property type="term" value="P:L-arginine biosynthetic process"/>
    <property type="evidence" value="ECO:0007669"/>
    <property type="project" value="TreeGrafter"/>
</dbReference>
<dbReference type="GO" id="GO:0009089">
    <property type="term" value="P:lysine biosynthetic process via diaminopimelate"/>
    <property type="evidence" value="ECO:0007669"/>
    <property type="project" value="UniProtKB-UniRule"/>
</dbReference>
<dbReference type="CDD" id="cd03891">
    <property type="entry name" value="M20_DapE_proteobac"/>
    <property type="match status" value="1"/>
</dbReference>
<dbReference type="Gene3D" id="3.40.630.10">
    <property type="entry name" value="Zn peptidases"/>
    <property type="match status" value="2"/>
</dbReference>
<dbReference type="HAMAP" id="MF_01690">
    <property type="entry name" value="DapE"/>
    <property type="match status" value="1"/>
</dbReference>
<dbReference type="InterPro" id="IPR001261">
    <property type="entry name" value="ArgE/DapE_CS"/>
</dbReference>
<dbReference type="InterPro" id="IPR036264">
    <property type="entry name" value="Bact_exopeptidase_dim_dom"/>
</dbReference>
<dbReference type="InterPro" id="IPR005941">
    <property type="entry name" value="DapE_proteobac"/>
</dbReference>
<dbReference type="InterPro" id="IPR002933">
    <property type="entry name" value="Peptidase_M20"/>
</dbReference>
<dbReference type="InterPro" id="IPR011650">
    <property type="entry name" value="Peptidase_M20_dimer"/>
</dbReference>
<dbReference type="InterPro" id="IPR050072">
    <property type="entry name" value="Peptidase_M20A"/>
</dbReference>
<dbReference type="NCBIfam" id="TIGR01246">
    <property type="entry name" value="dapE_proteo"/>
    <property type="match status" value="1"/>
</dbReference>
<dbReference type="NCBIfam" id="NF009557">
    <property type="entry name" value="PRK13009.1"/>
    <property type="match status" value="1"/>
</dbReference>
<dbReference type="PANTHER" id="PTHR43808">
    <property type="entry name" value="ACETYLORNITHINE DEACETYLASE"/>
    <property type="match status" value="1"/>
</dbReference>
<dbReference type="PANTHER" id="PTHR43808:SF31">
    <property type="entry name" value="N-ACETYL-L-CITRULLINE DEACETYLASE"/>
    <property type="match status" value="1"/>
</dbReference>
<dbReference type="Pfam" id="PF07687">
    <property type="entry name" value="M20_dimer"/>
    <property type="match status" value="1"/>
</dbReference>
<dbReference type="Pfam" id="PF01546">
    <property type="entry name" value="Peptidase_M20"/>
    <property type="match status" value="1"/>
</dbReference>
<dbReference type="SUPFAM" id="SSF55031">
    <property type="entry name" value="Bacterial exopeptidase dimerisation domain"/>
    <property type="match status" value="1"/>
</dbReference>
<dbReference type="SUPFAM" id="SSF53187">
    <property type="entry name" value="Zn-dependent exopeptidases"/>
    <property type="match status" value="1"/>
</dbReference>
<dbReference type="PROSITE" id="PS00758">
    <property type="entry name" value="ARGE_DAPE_CPG2_1"/>
    <property type="match status" value="1"/>
</dbReference>